<protein>
    <recommendedName>
        <fullName>Alanine aminotransferase 1</fullName>
        <shortName>ALT1</shortName>
        <ecNumber>2.6.1.2</ecNumber>
    </recommendedName>
    <alternativeName>
        <fullName>Glutamate pyruvate transaminase 1</fullName>
        <shortName>GPT 1</shortName>
    </alternativeName>
    <alternativeName>
        <fullName>Glutamic--alanine transaminase 1</fullName>
    </alternativeName>
    <alternativeName>
        <fullName>Glutamic--pyruvic transaminase 1</fullName>
    </alternativeName>
</protein>
<dbReference type="EC" id="2.6.1.2"/>
<dbReference type="PIR" id="A14344">
    <property type="entry name" value="A14344"/>
</dbReference>
<dbReference type="STRING" id="9823.ENSSSCP00000057639"/>
<dbReference type="GlyCosmos" id="P13191">
    <property type="glycosylation" value="1 site, No reported glycans"/>
</dbReference>
<dbReference type="PaxDb" id="9823-ENSSSCP00000006308"/>
<dbReference type="PeptideAtlas" id="P13191"/>
<dbReference type="eggNOG" id="KOG0258">
    <property type="taxonomic scope" value="Eukaryota"/>
</dbReference>
<dbReference type="HOGENOM" id="CLU_014254_3_1_1"/>
<dbReference type="InParanoid" id="P13191"/>
<dbReference type="SABIO-RK" id="P13191"/>
<dbReference type="UniPathway" id="UPA00528">
    <property type="reaction ID" value="UER00586"/>
</dbReference>
<dbReference type="Proteomes" id="UP000008227">
    <property type="component" value="Unplaced"/>
</dbReference>
<dbReference type="Proteomes" id="UP000314985">
    <property type="component" value="Unplaced"/>
</dbReference>
<dbReference type="Proteomes" id="UP000694570">
    <property type="component" value="Unplaced"/>
</dbReference>
<dbReference type="Proteomes" id="UP000694571">
    <property type="component" value="Unplaced"/>
</dbReference>
<dbReference type="Proteomes" id="UP000694720">
    <property type="component" value="Unplaced"/>
</dbReference>
<dbReference type="Proteomes" id="UP000694722">
    <property type="component" value="Unplaced"/>
</dbReference>
<dbReference type="Proteomes" id="UP000694723">
    <property type="component" value="Unplaced"/>
</dbReference>
<dbReference type="Proteomes" id="UP000694724">
    <property type="component" value="Unplaced"/>
</dbReference>
<dbReference type="Proteomes" id="UP000694725">
    <property type="component" value="Unplaced"/>
</dbReference>
<dbReference type="Proteomes" id="UP000694726">
    <property type="component" value="Unplaced"/>
</dbReference>
<dbReference type="Proteomes" id="UP000694727">
    <property type="component" value="Unplaced"/>
</dbReference>
<dbReference type="Proteomes" id="UP000694728">
    <property type="component" value="Unplaced"/>
</dbReference>
<dbReference type="GO" id="GO:0005737">
    <property type="term" value="C:cytoplasm"/>
    <property type="evidence" value="ECO:0007669"/>
    <property type="project" value="UniProtKB-SubCell"/>
</dbReference>
<dbReference type="GO" id="GO:0004021">
    <property type="term" value="F:L-alanine:2-oxoglutarate aminotransferase activity"/>
    <property type="evidence" value="ECO:0007669"/>
    <property type="project" value="UniProtKB-EC"/>
</dbReference>
<dbReference type="GO" id="GO:0042853">
    <property type="term" value="P:L-alanine catabolic process"/>
    <property type="evidence" value="ECO:0007669"/>
    <property type="project" value="UniProtKB-UniPathway"/>
</dbReference>
<dbReference type="Gene3D" id="3.40.640.10">
    <property type="entry name" value="Type I PLP-dependent aspartate aminotransferase-like (Major domain)"/>
    <property type="match status" value="1"/>
</dbReference>
<dbReference type="InterPro" id="IPR015421">
    <property type="entry name" value="PyrdxlP-dep_Trfase_major"/>
</dbReference>
<evidence type="ECO:0000250" key="1"/>
<evidence type="ECO:0000269" key="2">
    <source>
    </source>
</evidence>
<evidence type="ECO:0000305" key="3"/>
<proteinExistence type="evidence at protein level"/>
<sequence>QELASFHSVSKGFMGECGFR</sequence>
<accession>P13191</accession>
<reference key="1">
    <citation type="journal article" date="1979" name="Biochemistry">
        <title>Pyridoxal 5'-phosphate binding site of pig heart alanine aminotransferase.</title>
        <authorList>
            <person name="Tanase S."/>
            <person name="Kojima H."/>
            <person name="Morino Y."/>
        </authorList>
    </citation>
    <scope>PROTEIN SEQUENCE</scope>
    <source>
        <tissue>Heart</tissue>
    </source>
</reference>
<reference key="2">
    <citation type="journal article" date="2001" name="Mol. Cell. Biochem.">
        <title>Inhibitory effect of glycation on catalytic activity of alanine aminotransferase.</title>
        <authorList>
            <person name="Beranek M."/>
            <person name="Drsata J."/>
            <person name="Palicka V."/>
        </authorList>
    </citation>
    <scope>GLYCATION AT LYS-11</scope>
</reference>
<organism>
    <name type="scientific">Sus scrofa</name>
    <name type="common">Pig</name>
    <dbReference type="NCBI Taxonomy" id="9823"/>
    <lineage>
        <taxon>Eukaryota</taxon>
        <taxon>Metazoa</taxon>
        <taxon>Chordata</taxon>
        <taxon>Craniata</taxon>
        <taxon>Vertebrata</taxon>
        <taxon>Euteleostomi</taxon>
        <taxon>Mammalia</taxon>
        <taxon>Eutheria</taxon>
        <taxon>Laurasiatheria</taxon>
        <taxon>Artiodactyla</taxon>
        <taxon>Suina</taxon>
        <taxon>Suidae</taxon>
        <taxon>Sus</taxon>
    </lineage>
</organism>
<name>ALAT1_PIG</name>
<comment type="function">
    <text evidence="1">Catalyzes the reversible transamination between alanine and 2-oxoglutarate to form pyruvate and glutamate. Participates in cellular nitrogen metabolism and also in liver gluconeogenesis starting with precursors transported from skeletal muscles (By similarity).</text>
</comment>
<comment type="catalytic activity">
    <reaction>
        <text>L-alanine + 2-oxoglutarate = pyruvate + L-glutamate</text>
        <dbReference type="Rhea" id="RHEA:19453"/>
        <dbReference type="ChEBI" id="CHEBI:15361"/>
        <dbReference type="ChEBI" id="CHEBI:16810"/>
        <dbReference type="ChEBI" id="CHEBI:29985"/>
        <dbReference type="ChEBI" id="CHEBI:57972"/>
        <dbReference type="EC" id="2.6.1.2"/>
    </reaction>
</comment>
<comment type="cofactor">
    <cofactor>
        <name>pyridoxal 5'-phosphate</name>
        <dbReference type="ChEBI" id="CHEBI:597326"/>
    </cofactor>
</comment>
<comment type="pathway">
    <text>Amino-acid degradation; L-alanine degradation via transaminase pathway; pyruvate from L-alanine: step 1/1.</text>
</comment>
<comment type="subunit">
    <text>Homodimer.</text>
</comment>
<comment type="subcellular location">
    <subcellularLocation>
        <location>Cytoplasm</location>
    </subcellularLocation>
</comment>
<comment type="PTM">
    <text>Glycation of Lys-11 inactivates the enzyme.</text>
</comment>
<comment type="similarity">
    <text evidence="3">Belongs to the class-I pyridoxal-phosphate-dependent aminotransferase family. Alanine aminotransferase subfamily.</text>
</comment>
<feature type="chain" id="PRO_0000123935" description="Alanine aminotransferase 1">
    <location>
        <begin position="1" status="less than"/>
        <end position="20" status="greater than"/>
    </location>
</feature>
<feature type="modified residue" description="N6-(pyridoxal phosphate)lysine">
    <location>
        <position position="11"/>
    </location>
</feature>
<feature type="glycosylation site" description="N-linked (Glc) (glycation) lysine; in vitro" evidence="2">
    <location>
        <position position="11"/>
    </location>
</feature>
<feature type="non-terminal residue">
    <location>
        <position position="1"/>
    </location>
</feature>
<feature type="non-terminal residue">
    <location>
        <position position="20"/>
    </location>
</feature>
<gene>
    <name type="primary">GPT</name>
    <name type="synonym">AAT1</name>
    <name type="synonym">GPT1</name>
</gene>
<keyword id="KW-0032">Aminotransferase</keyword>
<keyword id="KW-0963">Cytoplasm</keyword>
<keyword id="KW-0903">Direct protein sequencing</keyword>
<keyword id="KW-0971">Glycation</keyword>
<keyword id="KW-0325">Glycoprotein</keyword>
<keyword id="KW-0663">Pyridoxal phosphate</keyword>
<keyword id="KW-1185">Reference proteome</keyword>
<keyword id="KW-0808">Transferase</keyword>